<dbReference type="EC" id="1.8.1.2" evidence="1"/>
<dbReference type="EMBL" id="CP000115">
    <property type="protein sequence ID" value="ABA03858.1"/>
    <property type="molecule type" value="Genomic_DNA"/>
</dbReference>
<dbReference type="RefSeq" id="WP_011313919.1">
    <property type="nucleotide sequence ID" value="NC_007406.1"/>
</dbReference>
<dbReference type="SMR" id="Q3SV33"/>
<dbReference type="STRING" id="323098.Nwi_0591"/>
<dbReference type="KEGG" id="nwi:Nwi_0591"/>
<dbReference type="eggNOG" id="COG0155">
    <property type="taxonomic scope" value="Bacteria"/>
</dbReference>
<dbReference type="HOGENOM" id="CLU_001975_3_2_5"/>
<dbReference type="OrthoDB" id="9803707at2"/>
<dbReference type="UniPathway" id="UPA00140">
    <property type="reaction ID" value="UER00207"/>
</dbReference>
<dbReference type="Proteomes" id="UP000002531">
    <property type="component" value="Chromosome"/>
</dbReference>
<dbReference type="GO" id="GO:0009337">
    <property type="term" value="C:sulfite reductase complex (NADPH)"/>
    <property type="evidence" value="ECO:0007669"/>
    <property type="project" value="InterPro"/>
</dbReference>
<dbReference type="GO" id="GO:0051539">
    <property type="term" value="F:4 iron, 4 sulfur cluster binding"/>
    <property type="evidence" value="ECO:0007669"/>
    <property type="project" value="UniProtKB-KW"/>
</dbReference>
<dbReference type="GO" id="GO:0020037">
    <property type="term" value="F:heme binding"/>
    <property type="evidence" value="ECO:0007669"/>
    <property type="project" value="InterPro"/>
</dbReference>
<dbReference type="GO" id="GO:0046872">
    <property type="term" value="F:metal ion binding"/>
    <property type="evidence" value="ECO:0007669"/>
    <property type="project" value="UniProtKB-KW"/>
</dbReference>
<dbReference type="GO" id="GO:0050661">
    <property type="term" value="F:NADP binding"/>
    <property type="evidence" value="ECO:0007669"/>
    <property type="project" value="InterPro"/>
</dbReference>
<dbReference type="GO" id="GO:0050311">
    <property type="term" value="F:sulfite reductase (ferredoxin) activity"/>
    <property type="evidence" value="ECO:0007669"/>
    <property type="project" value="TreeGrafter"/>
</dbReference>
<dbReference type="GO" id="GO:0004783">
    <property type="term" value="F:sulfite reductase (NADPH) activity"/>
    <property type="evidence" value="ECO:0007669"/>
    <property type="project" value="UniProtKB-UniRule"/>
</dbReference>
<dbReference type="GO" id="GO:0019344">
    <property type="term" value="P:cysteine biosynthetic process"/>
    <property type="evidence" value="ECO:0007669"/>
    <property type="project" value="UniProtKB-KW"/>
</dbReference>
<dbReference type="GO" id="GO:0070814">
    <property type="term" value="P:hydrogen sulfide biosynthetic process"/>
    <property type="evidence" value="ECO:0007669"/>
    <property type="project" value="UniProtKB-UniRule"/>
</dbReference>
<dbReference type="GO" id="GO:0000103">
    <property type="term" value="P:sulfate assimilation"/>
    <property type="evidence" value="ECO:0007669"/>
    <property type="project" value="UniProtKB-UniRule"/>
</dbReference>
<dbReference type="FunFam" id="3.30.413.10:FF:000003">
    <property type="entry name" value="Sulfite reductase [NADPH] hemoprotein beta-component"/>
    <property type="match status" value="1"/>
</dbReference>
<dbReference type="Gene3D" id="3.90.480.20">
    <property type="match status" value="1"/>
</dbReference>
<dbReference type="Gene3D" id="3.30.413.10">
    <property type="entry name" value="Sulfite Reductase Hemoprotein, domain 1"/>
    <property type="match status" value="2"/>
</dbReference>
<dbReference type="Gene3D" id="3.90.480.10">
    <property type="entry name" value="Sulfite Reductase Hemoprotein,Domain 2"/>
    <property type="match status" value="1"/>
</dbReference>
<dbReference type="HAMAP" id="MF_01540">
    <property type="entry name" value="CysI"/>
    <property type="match status" value="1"/>
</dbReference>
<dbReference type="InterPro" id="IPR011786">
    <property type="entry name" value="CysI"/>
</dbReference>
<dbReference type="InterPro" id="IPR005117">
    <property type="entry name" value="NiRdtase/SiRdtase_haem-b_fer"/>
</dbReference>
<dbReference type="InterPro" id="IPR036136">
    <property type="entry name" value="Nit/Sulf_reduc_fer-like_dom_sf"/>
</dbReference>
<dbReference type="InterPro" id="IPR006067">
    <property type="entry name" value="NO2/SO3_Rdtase_4Fe4S_dom"/>
</dbReference>
<dbReference type="InterPro" id="IPR045169">
    <property type="entry name" value="NO2/SO3_Rdtase_4Fe4S_prot"/>
</dbReference>
<dbReference type="InterPro" id="IPR045854">
    <property type="entry name" value="NO2/SO3_Rdtase_4Fe4S_sf"/>
</dbReference>
<dbReference type="InterPro" id="IPR006066">
    <property type="entry name" value="NO2/SO3_Rdtase_FeS/sirohaem_BS"/>
</dbReference>
<dbReference type="NCBIfam" id="TIGR02041">
    <property type="entry name" value="CysI"/>
    <property type="match status" value="1"/>
</dbReference>
<dbReference type="NCBIfam" id="NF010029">
    <property type="entry name" value="PRK13504.1"/>
    <property type="match status" value="1"/>
</dbReference>
<dbReference type="PANTHER" id="PTHR11493:SF47">
    <property type="entry name" value="SULFITE REDUCTASE [NADPH] SUBUNIT BETA"/>
    <property type="match status" value="1"/>
</dbReference>
<dbReference type="PANTHER" id="PTHR11493">
    <property type="entry name" value="SULFITE REDUCTASE [NADPH] SUBUNIT BETA-RELATED"/>
    <property type="match status" value="1"/>
</dbReference>
<dbReference type="Pfam" id="PF01077">
    <property type="entry name" value="NIR_SIR"/>
    <property type="match status" value="2"/>
</dbReference>
<dbReference type="Pfam" id="PF03460">
    <property type="entry name" value="NIR_SIR_ferr"/>
    <property type="match status" value="2"/>
</dbReference>
<dbReference type="PRINTS" id="PR00397">
    <property type="entry name" value="SIROHAEM"/>
</dbReference>
<dbReference type="SUPFAM" id="SSF56014">
    <property type="entry name" value="Nitrite and sulphite reductase 4Fe-4S domain-like"/>
    <property type="match status" value="2"/>
</dbReference>
<dbReference type="SUPFAM" id="SSF55124">
    <property type="entry name" value="Nitrite/Sulfite reductase N-terminal domain-like"/>
    <property type="match status" value="2"/>
</dbReference>
<dbReference type="PROSITE" id="PS00365">
    <property type="entry name" value="NIR_SIR"/>
    <property type="match status" value="1"/>
</dbReference>
<comment type="function">
    <text evidence="1">Component of the sulfite reductase complex that catalyzes the 6-electron reduction of sulfite to sulfide. This is one of several activities required for the biosynthesis of L-cysteine from sulfate.</text>
</comment>
<comment type="catalytic activity">
    <reaction evidence="1">
        <text>hydrogen sulfide + 3 NADP(+) + 3 H2O = sulfite + 3 NADPH + 4 H(+)</text>
        <dbReference type="Rhea" id="RHEA:13801"/>
        <dbReference type="ChEBI" id="CHEBI:15377"/>
        <dbReference type="ChEBI" id="CHEBI:15378"/>
        <dbReference type="ChEBI" id="CHEBI:17359"/>
        <dbReference type="ChEBI" id="CHEBI:29919"/>
        <dbReference type="ChEBI" id="CHEBI:57783"/>
        <dbReference type="ChEBI" id="CHEBI:58349"/>
        <dbReference type="EC" id="1.8.1.2"/>
    </reaction>
</comment>
<comment type="cofactor">
    <cofactor evidence="1">
        <name>siroheme</name>
        <dbReference type="ChEBI" id="CHEBI:60052"/>
    </cofactor>
    <text evidence="1">Binds 1 siroheme per subunit.</text>
</comment>
<comment type="cofactor">
    <cofactor evidence="1">
        <name>[4Fe-4S] cluster</name>
        <dbReference type="ChEBI" id="CHEBI:49883"/>
    </cofactor>
    <text evidence="1">Binds 1 [4Fe-4S] cluster per subunit.</text>
</comment>
<comment type="pathway">
    <text evidence="1">Sulfur metabolism; hydrogen sulfide biosynthesis; hydrogen sulfide from sulfite (NADPH route): step 1/1.</text>
</comment>
<comment type="subunit">
    <text evidence="1">Alpha(8)-beta(8). The alpha component is a flavoprotein, the beta component is a hemoprotein.</text>
</comment>
<comment type="similarity">
    <text evidence="1">Belongs to the nitrite and sulfite reductase 4Fe-4S domain family.</text>
</comment>
<name>CYSI_NITWN</name>
<accession>Q3SV33</accession>
<proteinExistence type="inferred from homology"/>
<feature type="chain" id="PRO_0000388503" description="Sulfite reductase [NADPH] hemoprotein beta-component">
    <location>
        <begin position="1"/>
        <end position="576"/>
    </location>
</feature>
<feature type="region of interest" description="Disordered" evidence="2">
    <location>
        <begin position="1"/>
        <end position="26"/>
    </location>
</feature>
<feature type="compositionally biased region" description="Basic and acidic residues" evidence="2">
    <location>
        <begin position="1"/>
        <end position="12"/>
    </location>
</feature>
<feature type="binding site" evidence="1">
    <location>
        <position position="441"/>
    </location>
    <ligand>
        <name>[4Fe-4S] cluster</name>
        <dbReference type="ChEBI" id="CHEBI:49883"/>
    </ligand>
</feature>
<feature type="binding site" evidence="1">
    <location>
        <position position="447"/>
    </location>
    <ligand>
        <name>[4Fe-4S] cluster</name>
        <dbReference type="ChEBI" id="CHEBI:49883"/>
    </ligand>
</feature>
<feature type="binding site" evidence="1">
    <location>
        <position position="486"/>
    </location>
    <ligand>
        <name>[4Fe-4S] cluster</name>
        <dbReference type="ChEBI" id="CHEBI:49883"/>
    </ligand>
</feature>
<feature type="binding site" evidence="1">
    <location>
        <position position="490"/>
    </location>
    <ligand>
        <name>[4Fe-4S] cluster</name>
        <dbReference type="ChEBI" id="CHEBI:49883"/>
    </ligand>
</feature>
<feature type="binding site" description="axial binding residue" evidence="1">
    <location>
        <position position="490"/>
    </location>
    <ligand>
        <name>siroheme</name>
        <dbReference type="ChEBI" id="CHEBI:60052"/>
    </ligand>
    <ligandPart>
        <name>Fe</name>
        <dbReference type="ChEBI" id="CHEBI:18248"/>
    </ligandPart>
</feature>
<sequence length="576" mass="64770">MDAKTQPDRSRDVSQPLDKLGPDETLKANSDYLRGTIKQSLADEITSAVTANDAKLMKFFGIYQQDDRDIRDERRRQKLEAAFSFMVRVRLPGGVCSPGQWLKLDELARNYAGDTLRLTTRQTFQFHRVMKHNLRSLIQGLRDILLDTRAACGDDTRGVMSTVNPDLSKLHAEVYALAKRASDHAVHRTGAYKEIWYEAEREQTDGPEEPFYGRTYMPRKFKIGFAIPPSNDIDVYGQDLGFIAIAHRGKLKGFNVAIGGGLGRTDQSPKTYPRLASVIGYIDADKLFPTIDAVMSVQRDYGDRLDRLHARFKYTIDEKGIDWIKAETERRLGFALKPEQPYTFTSNGDPLGWVKGEDGREHCALFIQNGRVINTPDHPMMDGLRAIAQVHKGMFRVTPNQNLIIADIASRDRPEIEALMKEYGLDQFETRSGLRLNSMACVALPTCGLAMAESERYLPDLLTKIEAILNTYGLTDDPITIRMTGCPNGCARPYIAEIGLTGRAPGKYNLYLGGGFHGERLNKMYLENVGEPAILEALDKTLGHYARDRKPGEHFGDFAIRAGYVVEVKEGRFFND</sequence>
<protein>
    <recommendedName>
        <fullName evidence="1">Sulfite reductase [NADPH] hemoprotein beta-component</fullName>
        <shortName evidence="1">SiR-HP</shortName>
        <shortName evidence="1">SiRHP</shortName>
        <ecNumber evidence="1">1.8.1.2</ecNumber>
    </recommendedName>
</protein>
<evidence type="ECO:0000255" key="1">
    <source>
        <dbReference type="HAMAP-Rule" id="MF_01540"/>
    </source>
</evidence>
<evidence type="ECO:0000256" key="2">
    <source>
        <dbReference type="SAM" id="MobiDB-lite"/>
    </source>
</evidence>
<organism>
    <name type="scientific">Nitrobacter winogradskyi (strain ATCC 25391 / DSM 10237 / CIP 104748 / NCIMB 11846 / Nb-255)</name>
    <dbReference type="NCBI Taxonomy" id="323098"/>
    <lineage>
        <taxon>Bacteria</taxon>
        <taxon>Pseudomonadati</taxon>
        <taxon>Pseudomonadota</taxon>
        <taxon>Alphaproteobacteria</taxon>
        <taxon>Hyphomicrobiales</taxon>
        <taxon>Nitrobacteraceae</taxon>
        <taxon>Nitrobacter</taxon>
    </lineage>
</organism>
<gene>
    <name evidence="1" type="primary">cysI</name>
    <name type="ordered locus">Nwi_0591</name>
</gene>
<reference key="1">
    <citation type="journal article" date="2006" name="Appl. Environ. Microbiol.">
        <title>Genome sequence of the chemolithoautotrophic nitrite-oxidizing bacterium Nitrobacter winogradskyi Nb-255.</title>
        <authorList>
            <person name="Starkenburg S.R."/>
            <person name="Chain P.S.G."/>
            <person name="Sayavedra-Soto L.A."/>
            <person name="Hauser L."/>
            <person name="Land M.L."/>
            <person name="Larimer F.W."/>
            <person name="Malfatti S.A."/>
            <person name="Klotz M.G."/>
            <person name="Bottomley P.J."/>
            <person name="Arp D.J."/>
            <person name="Hickey W.J."/>
        </authorList>
    </citation>
    <scope>NUCLEOTIDE SEQUENCE [LARGE SCALE GENOMIC DNA]</scope>
    <source>
        <strain>ATCC 25391 / DSM 10237 / CIP 104748 / NCIMB 11846 / Nb-255</strain>
    </source>
</reference>
<keyword id="KW-0004">4Fe-4S</keyword>
<keyword id="KW-0028">Amino-acid biosynthesis</keyword>
<keyword id="KW-0198">Cysteine biosynthesis</keyword>
<keyword id="KW-0349">Heme</keyword>
<keyword id="KW-0408">Iron</keyword>
<keyword id="KW-0411">Iron-sulfur</keyword>
<keyword id="KW-0479">Metal-binding</keyword>
<keyword id="KW-0521">NADP</keyword>
<keyword id="KW-0560">Oxidoreductase</keyword>
<keyword id="KW-1185">Reference proteome</keyword>